<name>MLTC_HAEIE</name>
<reference key="1">
    <citation type="journal article" date="2007" name="Genome Biol.">
        <title>Characterization and modeling of the Haemophilus influenzae core and supragenomes based on the complete genomic sequences of Rd and 12 clinical nontypeable strains.</title>
        <authorList>
            <person name="Hogg J.S."/>
            <person name="Hu F.Z."/>
            <person name="Janto B."/>
            <person name="Boissy R."/>
            <person name="Hayes J."/>
            <person name="Keefe R."/>
            <person name="Post J.C."/>
            <person name="Ehrlich G.D."/>
        </authorList>
    </citation>
    <scope>NUCLEOTIDE SEQUENCE [LARGE SCALE GENOMIC DNA]</scope>
    <source>
        <strain>PittEE</strain>
    </source>
</reference>
<organism>
    <name type="scientific">Haemophilus influenzae (strain PittEE)</name>
    <dbReference type="NCBI Taxonomy" id="374930"/>
    <lineage>
        <taxon>Bacteria</taxon>
        <taxon>Pseudomonadati</taxon>
        <taxon>Pseudomonadota</taxon>
        <taxon>Gammaproteobacteria</taxon>
        <taxon>Pasteurellales</taxon>
        <taxon>Pasteurellaceae</taxon>
        <taxon>Haemophilus</taxon>
    </lineage>
</organism>
<protein>
    <recommendedName>
        <fullName evidence="1">Membrane-bound lytic murein transglycosylase C</fullName>
        <ecNumber evidence="1">4.2.2.n1</ecNumber>
    </recommendedName>
    <alternativeName>
        <fullName evidence="1">Murein lyase C</fullName>
    </alternativeName>
</protein>
<sequence length="357" mass="40254">MKKYLLLALLPFLYACSNSPNQGINYDEAFAKDTQGLDILTGQFSHNIDRIWGVNELLVASRKDYVKYTDSFYTRSHVSFDEGNIVIETQQDPNRLHNAIVHTLLMGADAKGIDLFASGDVPISSRPFLLGQVVDHQGQQIANQVIASNFATYLIQNKLQTRRLQNGHTVQFVSVPMIANHVEVRARKYLPLIRKAAQRYGIDESLILGIMQTESSFNPYAISYANAIGLMQVVPHTAGRDVFTMKGKGGQPSTRYLYDPTNNIDAGVSYLWILQNQYLDGITNPTSKRFAMISAYNSGAGAVLRVFDNDKDMAIYKINQMYPEQVYRILTTAHPSSQARNYLLKVDKAQKKFRVRR</sequence>
<gene>
    <name evidence="1" type="primary">mltC</name>
    <name type="ordered locus">CGSHiEE_08290</name>
</gene>
<accession>A5UDW4</accession>
<evidence type="ECO:0000255" key="1">
    <source>
        <dbReference type="HAMAP-Rule" id="MF_01616"/>
    </source>
</evidence>
<feature type="signal peptide" evidence="1">
    <location>
        <begin position="1"/>
        <end position="15"/>
    </location>
</feature>
<feature type="chain" id="PRO_1000069476" description="Membrane-bound lytic murein transglycosylase C">
    <location>
        <begin position="16"/>
        <end position="357"/>
    </location>
</feature>
<feature type="lipid moiety-binding region" description="N-palmitoyl cysteine" evidence="1">
    <location>
        <position position="16"/>
    </location>
</feature>
<feature type="lipid moiety-binding region" description="S-diacylglycerol cysteine" evidence="1">
    <location>
        <position position="16"/>
    </location>
</feature>
<keyword id="KW-0998">Cell outer membrane</keyword>
<keyword id="KW-0961">Cell wall biogenesis/degradation</keyword>
<keyword id="KW-0449">Lipoprotein</keyword>
<keyword id="KW-0456">Lyase</keyword>
<keyword id="KW-0472">Membrane</keyword>
<keyword id="KW-0564">Palmitate</keyword>
<keyword id="KW-0732">Signal</keyword>
<dbReference type="EC" id="4.2.2.n1" evidence="1"/>
<dbReference type="EMBL" id="CP000671">
    <property type="protein sequence ID" value="ABQ98965.1"/>
    <property type="molecule type" value="Genomic_DNA"/>
</dbReference>
<dbReference type="SMR" id="A5UDW4"/>
<dbReference type="CAZy" id="GH23">
    <property type="family name" value="Glycoside Hydrolase Family 23"/>
</dbReference>
<dbReference type="KEGG" id="hip:CGSHiEE_08290"/>
<dbReference type="HOGENOM" id="CLU_044583_0_0_6"/>
<dbReference type="GO" id="GO:0009279">
    <property type="term" value="C:cell outer membrane"/>
    <property type="evidence" value="ECO:0007669"/>
    <property type="project" value="UniProtKB-SubCell"/>
</dbReference>
<dbReference type="GO" id="GO:0016798">
    <property type="term" value="F:hydrolase activity, acting on glycosyl bonds"/>
    <property type="evidence" value="ECO:0007669"/>
    <property type="project" value="InterPro"/>
</dbReference>
<dbReference type="GO" id="GO:0008933">
    <property type="term" value="F:peptidoglycan lytic transglycosylase activity"/>
    <property type="evidence" value="ECO:0007669"/>
    <property type="project" value="UniProtKB-UniRule"/>
</dbReference>
<dbReference type="GO" id="GO:0016998">
    <property type="term" value="P:cell wall macromolecule catabolic process"/>
    <property type="evidence" value="ECO:0007669"/>
    <property type="project" value="UniProtKB-UniRule"/>
</dbReference>
<dbReference type="GO" id="GO:0071555">
    <property type="term" value="P:cell wall organization"/>
    <property type="evidence" value="ECO:0007669"/>
    <property type="project" value="UniProtKB-KW"/>
</dbReference>
<dbReference type="GO" id="GO:0000270">
    <property type="term" value="P:peptidoglycan metabolic process"/>
    <property type="evidence" value="ECO:0007669"/>
    <property type="project" value="InterPro"/>
</dbReference>
<dbReference type="CDD" id="cd16893">
    <property type="entry name" value="LT_MltC_MltE"/>
    <property type="match status" value="1"/>
</dbReference>
<dbReference type="Gene3D" id="1.10.530.10">
    <property type="match status" value="1"/>
</dbReference>
<dbReference type="HAMAP" id="MF_01616">
    <property type="entry name" value="MltC"/>
    <property type="match status" value="1"/>
</dbReference>
<dbReference type="InterPro" id="IPR023346">
    <property type="entry name" value="Lysozyme-like_dom_sf"/>
</dbReference>
<dbReference type="InterPro" id="IPR023664">
    <property type="entry name" value="Murein_transglycosylaseC"/>
</dbReference>
<dbReference type="InterPro" id="IPR024570">
    <property type="entry name" value="Murein_transglycosylaseC_N"/>
</dbReference>
<dbReference type="InterPro" id="IPR000189">
    <property type="entry name" value="Transglyc_AS"/>
</dbReference>
<dbReference type="InterPro" id="IPR008258">
    <property type="entry name" value="Transglycosylase_SLT_dom_1"/>
</dbReference>
<dbReference type="NCBIfam" id="NF008670">
    <property type="entry name" value="PRK11671.1"/>
    <property type="match status" value="1"/>
</dbReference>
<dbReference type="PANTHER" id="PTHR37423:SF2">
    <property type="entry name" value="MEMBRANE-BOUND LYTIC MUREIN TRANSGLYCOSYLASE C"/>
    <property type="match status" value="1"/>
</dbReference>
<dbReference type="PANTHER" id="PTHR37423">
    <property type="entry name" value="SOLUBLE LYTIC MUREIN TRANSGLYCOSYLASE-RELATED"/>
    <property type="match status" value="1"/>
</dbReference>
<dbReference type="Pfam" id="PF11873">
    <property type="entry name" value="Mltc_N"/>
    <property type="match status" value="1"/>
</dbReference>
<dbReference type="Pfam" id="PF01464">
    <property type="entry name" value="SLT"/>
    <property type="match status" value="1"/>
</dbReference>
<dbReference type="SUPFAM" id="SSF53955">
    <property type="entry name" value="Lysozyme-like"/>
    <property type="match status" value="1"/>
</dbReference>
<dbReference type="PROSITE" id="PS51257">
    <property type="entry name" value="PROKAR_LIPOPROTEIN"/>
    <property type="match status" value="1"/>
</dbReference>
<dbReference type="PROSITE" id="PS00922">
    <property type="entry name" value="TRANSGLYCOSYLASE"/>
    <property type="match status" value="1"/>
</dbReference>
<proteinExistence type="inferred from homology"/>
<comment type="function">
    <text evidence="1">Murein-degrading enzyme. May play a role in recycling of muropeptides during cell elongation and/or cell division.</text>
</comment>
<comment type="catalytic activity">
    <reaction evidence="1">
        <text>Exolytic cleavage of the (1-&gt;4)-beta-glycosidic linkage between N-acetylmuramic acid (MurNAc) and N-acetylglucosamine (GlcNAc) residues in peptidoglycan, from either the reducing or the non-reducing ends of the peptidoglycan chains, with concomitant formation of a 1,6-anhydrobond in the MurNAc residue.</text>
        <dbReference type="EC" id="4.2.2.n1"/>
    </reaction>
</comment>
<comment type="subcellular location">
    <subcellularLocation>
        <location evidence="1">Cell outer membrane</location>
        <topology evidence="1">Lipid-anchor</topology>
    </subcellularLocation>
</comment>
<comment type="similarity">
    <text evidence="1">Belongs to the transglycosylase Slt family.</text>
</comment>